<sequence length="560" mass="59856">MASRRLLASLLRQSAQRGGGLISRSLGNSIPKSASRASSRASPKGFLLNRAVQYATSAAAPASQPSTPPKSGSEPSGKITDEFTGAGSIGKVCQVIGAVVDVRFDEGLPPILTALEVLDNQIRLVLEVAQHLGENMVRTIAMDGTEGLVRGQRVLNTGSPITVPVGRATLGRIINVIGEAIDERGPITTDHFLPIHREAPAFVEQATEQQILVTGIKVVDLLAPYQRGGKIGLFGGAGVGKTVLIMELINNVAKAHGGFSVFAGVGERTREGNDLYREMIESGVIKLGEKQSESKCALVYGQMNEPPGARARVGLTGLTVAEHFRDAEGQDVLLFIDNIFRFTQANSEVSALLGRIPSAVGYQPTLATDLGGLQERITTTKKGSITSVQAIYVPADDLTDPAPATTFAHLDATTVLSRQISELGIYPAVDPLDSTSRMLSPHILGEDHYNTARGVQKVLQNYKNLQDIIAILGMDELSEDDKMTVARARKIQRFLSQPFHVAEVFTGAPGKYVDLKESINSFQGVLDGKYDDLSEQSFYMVGGIDEVIAKAEKIAKESAA</sequence>
<keyword id="KW-0002">3D-structure</keyword>
<keyword id="KW-0066">ATP synthesis</keyword>
<keyword id="KW-0067">ATP-binding</keyword>
<keyword id="KW-0139">CF(1)</keyword>
<keyword id="KW-0375">Hydrogen ion transport</keyword>
<keyword id="KW-0406">Ion transport</keyword>
<keyword id="KW-0472">Membrane</keyword>
<keyword id="KW-0496">Mitochondrion</keyword>
<keyword id="KW-0999">Mitochondrion inner membrane</keyword>
<keyword id="KW-0547">Nucleotide-binding</keyword>
<keyword id="KW-0809">Transit peptide</keyword>
<keyword id="KW-1278">Translocase</keyword>
<keyword id="KW-0813">Transport</keyword>
<name>ATPBM_NICPL</name>
<feature type="transit peptide" description="Mitochondrion" evidence="3">
    <location>
        <begin position="1"/>
        <end position="54"/>
    </location>
</feature>
<feature type="chain" id="PRO_0000002440" description="ATP synthase subunit beta, mitochondrial">
    <location>
        <begin position="55"/>
        <end position="560"/>
    </location>
</feature>
<feature type="region of interest" description="Disordered" evidence="2">
    <location>
        <begin position="20"/>
        <end position="44"/>
    </location>
</feature>
<feature type="region of interest" description="Disordered" evidence="2">
    <location>
        <begin position="58"/>
        <end position="81"/>
    </location>
</feature>
<feature type="compositionally biased region" description="Low complexity" evidence="2">
    <location>
        <begin position="33"/>
        <end position="42"/>
    </location>
</feature>
<feature type="compositionally biased region" description="Low complexity" evidence="2">
    <location>
        <begin position="58"/>
        <end position="71"/>
    </location>
</feature>
<feature type="binding site" evidence="1">
    <location>
        <begin position="235"/>
        <end position="242"/>
    </location>
    <ligand>
        <name>ATP</name>
        <dbReference type="ChEBI" id="CHEBI:30616"/>
    </ligand>
</feature>
<feature type="helix" evidence="5">
    <location>
        <begin position="5"/>
        <end position="15"/>
    </location>
</feature>
<feature type="strand" evidence="5">
    <location>
        <begin position="21"/>
        <end position="24"/>
    </location>
</feature>
<feature type="helix" evidence="5">
    <location>
        <begin position="26"/>
        <end position="29"/>
    </location>
</feature>
<feature type="turn" evidence="5">
    <location>
        <begin position="30"/>
        <end position="33"/>
    </location>
</feature>
<feature type="turn" evidence="5">
    <location>
        <begin position="35"/>
        <end position="37"/>
    </location>
</feature>
<feature type="helix" evidence="5">
    <location>
        <begin position="43"/>
        <end position="53"/>
    </location>
</feature>
<protein>
    <recommendedName>
        <fullName>ATP synthase subunit beta, mitochondrial</fullName>
        <ecNumber>7.1.2.2</ecNumber>
    </recommendedName>
</protein>
<evidence type="ECO:0000250" key="1"/>
<evidence type="ECO:0000256" key="2">
    <source>
        <dbReference type="SAM" id="MobiDB-lite"/>
    </source>
</evidence>
<evidence type="ECO:0000269" key="3">
    <source>
    </source>
</evidence>
<evidence type="ECO:0000305" key="4"/>
<evidence type="ECO:0007829" key="5">
    <source>
        <dbReference type="PDB" id="1PYV"/>
    </source>
</evidence>
<accession>P17614</accession>
<organism>
    <name type="scientific">Nicotiana plumbaginifolia</name>
    <name type="common">Leadwort-leaved tobacco</name>
    <name type="synonym">Tex-Mex tobacco</name>
    <dbReference type="NCBI Taxonomy" id="4092"/>
    <lineage>
        <taxon>Eukaryota</taxon>
        <taxon>Viridiplantae</taxon>
        <taxon>Streptophyta</taxon>
        <taxon>Embryophyta</taxon>
        <taxon>Tracheophyta</taxon>
        <taxon>Spermatophyta</taxon>
        <taxon>Magnoliopsida</taxon>
        <taxon>eudicotyledons</taxon>
        <taxon>Gunneridae</taxon>
        <taxon>Pentapetalae</taxon>
        <taxon>asterids</taxon>
        <taxon>lamiids</taxon>
        <taxon>Solanales</taxon>
        <taxon>Solanaceae</taxon>
        <taxon>Nicotianoideae</taxon>
        <taxon>Nicotianeae</taxon>
        <taxon>Nicotiana</taxon>
    </lineage>
</organism>
<gene>
    <name type="primary">ATPB</name>
    <name type="synonym">ATP2-1</name>
</gene>
<dbReference type="EC" id="7.1.2.2"/>
<dbReference type="EMBL" id="X02868">
    <property type="protein sequence ID" value="CAA26620.1"/>
    <property type="molecule type" value="Genomic_DNA"/>
</dbReference>
<dbReference type="PIR" id="A24355">
    <property type="entry name" value="A24355"/>
</dbReference>
<dbReference type="PDB" id="1PYV">
    <property type="method" value="NMR"/>
    <property type="chains" value="A=1-54"/>
</dbReference>
<dbReference type="PDBsum" id="1PYV"/>
<dbReference type="SMR" id="P17614"/>
<dbReference type="IntAct" id="P17614">
    <property type="interactions" value="1"/>
</dbReference>
<dbReference type="MINT" id="P17614"/>
<dbReference type="EvolutionaryTrace" id="P17614"/>
<dbReference type="GO" id="GO:0005743">
    <property type="term" value="C:mitochondrial inner membrane"/>
    <property type="evidence" value="ECO:0007669"/>
    <property type="project" value="UniProtKB-SubCell"/>
</dbReference>
<dbReference type="GO" id="GO:0045259">
    <property type="term" value="C:proton-transporting ATP synthase complex"/>
    <property type="evidence" value="ECO:0007669"/>
    <property type="project" value="UniProtKB-KW"/>
</dbReference>
<dbReference type="GO" id="GO:0005524">
    <property type="term" value="F:ATP binding"/>
    <property type="evidence" value="ECO:0007669"/>
    <property type="project" value="UniProtKB-KW"/>
</dbReference>
<dbReference type="GO" id="GO:0016887">
    <property type="term" value="F:ATP hydrolysis activity"/>
    <property type="evidence" value="ECO:0007669"/>
    <property type="project" value="InterPro"/>
</dbReference>
<dbReference type="GO" id="GO:0046933">
    <property type="term" value="F:proton-transporting ATP synthase activity, rotational mechanism"/>
    <property type="evidence" value="ECO:0007669"/>
    <property type="project" value="InterPro"/>
</dbReference>
<dbReference type="GO" id="GO:0042776">
    <property type="term" value="P:proton motive force-driven mitochondrial ATP synthesis"/>
    <property type="evidence" value="ECO:0007669"/>
    <property type="project" value="TreeGrafter"/>
</dbReference>
<dbReference type="CDD" id="cd18110">
    <property type="entry name" value="ATP-synt_F1_beta_C"/>
    <property type="match status" value="1"/>
</dbReference>
<dbReference type="CDD" id="cd18115">
    <property type="entry name" value="ATP-synt_F1_beta_N"/>
    <property type="match status" value="1"/>
</dbReference>
<dbReference type="CDD" id="cd01133">
    <property type="entry name" value="F1-ATPase_beta_CD"/>
    <property type="match status" value="1"/>
</dbReference>
<dbReference type="FunFam" id="1.10.1140.10:FF:000001">
    <property type="entry name" value="ATP synthase subunit beta"/>
    <property type="match status" value="1"/>
</dbReference>
<dbReference type="FunFam" id="2.40.10.170:FF:000006">
    <property type="entry name" value="ATP synthase subunit beta"/>
    <property type="match status" value="1"/>
</dbReference>
<dbReference type="FunFam" id="3.40.50.300:FF:000026">
    <property type="entry name" value="ATP synthase subunit beta"/>
    <property type="match status" value="1"/>
</dbReference>
<dbReference type="Gene3D" id="2.40.10.170">
    <property type="match status" value="1"/>
</dbReference>
<dbReference type="Gene3D" id="1.10.10.910">
    <property type="entry name" value="ATP synthase, F1 beta subunit"/>
    <property type="match status" value="1"/>
</dbReference>
<dbReference type="Gene3D" id="1.10.1140.10">
    <property type="entry name" value="Bovine Mitochondrial F1-atpase, Atp Synthase Beta Chain, Chain D, domain 3"/>
    <property type="match status" value="1"/>
</dbReference>
<dbReference type="Gene3D" id="3.40.50.300">
    <property type="entry name" value="P-loop containing nucleotide triphosphate hydrolases"/>
    <property type="match status" value="1"/>
</dbReference>
<dbReference type="HAMAP" id="MF_01347">
    <property type="entry name" value="ATP_synth_beta_bact"/>
    <property type="match status" value="1"/>
</dbReference>
<dbReference type="InterPro" id="IPR003593">
    <property type="entry name" value="AAA+_ATPase"/>
</dbReference>
<dbReference type="InterPro" id="IPR055190">
    <property type="entry name" value="ATP-synt_VA_C"/>
</dbReference>
<dbReference type="InterPro" id="IPR042079">
    <property type="entry name" value="ATP_synt_F1_beta_sf"/>
</dbReference>
<dbReference type="InterPro" id="IPR020971">
    <property type="entry name" value="ATP_synth_F1_beta_su"/>
</dbReference>
<dbReference type="InterPro" id="IPR005722">
    <property type="entry name" value="ATP_synth_F1_bsu"/>
</dbReference>
<dbReference type="InterPro" id="IPR020003">
    <property type="entry name" value="ATPase_a/bsu_AS"/>
</dbReference>
<dbReference type="InterPro" id="IPR050053">
    <property type="entry name" value="ATPase_alpha/beta_chains"/>
</dbReference>
<dbReference type="InterPro" id="IPR004100">
    <property type="entry name" value="ATPase_F1/V1/A1_a/bsu_N"/>
</dbReference>
<dbReference type="InterPro" id="IPR036121">
    <property type="entry name" value="ATPase_F1/V1/A1_a/bsu_N_sf"/>
</dbReference>
<dbReference type="InterPro" id="IPR000194">
    <property type="entry name" value="ATPase_F1/V1/A1_a/bsu_nucl-bd"/>
</dbReference>
<dbReference type="InterPro" id="IPR024034">
    <property type="entry name" value="ATPase_F1/V1_b/a_C"/>
</dbReference>
<dbReference type="InterPro" id="IPR027417">
    <property type="entry name" value="P-loop_NTPase"/>
</dbReference>
<dbReference type="NCBIfam" id="TIGR01039">
    <property type="entry name" value="atpD"/>
    <property type="match status" value="1"/>
</dbReference>
<dbReference type="PANTHER" id="PTHR15184">
    <property type="entry name" value="ATP SYNTHASE"/>
    <property type="match status" value="1"/>
</dbReference>
<dbReference type="PANTHER" id="PTHR15184:SF80">
    <property type="entry name" value="ATP SYNTHASE SUBUNIT BETA-1, MITOCHONDRIAL-RELATED"/>
    <property type="match status" value="1"/>
</dbReference>
<dbReference type="Pfam" id="PF00006">
    <property type="entry name" value="ATP-synt_ab"/>
    <property type="match status" value="1"/>
</dbReference>
<dbReference type="Pfam" id="PF02874">
    <property type="entry name" value="ATP-synt_ab_N"/>
    <property type="match status" value="1"/>
</dbReference>
<dbReference type="Pfam" id="PF22919">
    <property type="entry name" value="ATP-synt_VA_C"/>
    <property type="match status" value="1"/>
</dbReference>
<dbReference type="Pfam" id="PF11421">
    <property type="entry name" value="Synthase_beta"/>
    <property type="match status" value="1"/>
</dbReference>
<dbReference type="PIRSF" id="PIRSF039072">
    <property type="entry name" value="ATPase_subunit_beta"/>
    <property type="match status" value="1"/>
</dbReference>
<dbReference type="SMART" id="SM00382">
    <property type="entry name" value="AAA"/>
    <property type="match status" value="1"/>
</dbReference>
<dbReference type="SUPFAM" id="SSF47917">
    <property type="entry name" value="C-terminal domain of alpha and beta subunits of F1 ATP synthase"/>
    <property type="match status" value="1"/>
</dbReference>
<dbReference type="SUPFAM" id="SSF50615">
    <property type="entry name" value="N-terminal domain of alpha and beta subunits of F1 ATP synthase"/>
    <property type="match status" value="1"/>
</dbReference>
<dbReference type="SUPFAM" id="SSF52540">
    <property type="entry name" value="P-loop containing nucleoside triphosphate hydrolases"/>
    <property type="match status" value="1"/>
</dbReference>
<dbReference type="PROSITE" id="PS00152">
    <property type="entry name" value="ATPASE_ALPHA_BETA"/>
    <property type="match status" value="1"/>
</dbReference>
<reference key="1">
    <citation type="journal article" date="1985" name="EMBO J.">
        <title>A nuclear gene encoding the beta subunit of the mitochondrial ATP synthase in Nicotiana plumbaginifolia.</title>
        <authorList>
            <person name="Boutry M."/>
            <person name="Chua N.H."/>
        </authorList>
    </citation>
    <scope>NUCLEOTIDE SEQUENCE [GENOMIC DNA]</scope>
</reference>
<reference key="2">
    <citation type="journal article" date="2004" name="J. Mol. Biol.">
        <title>NMR solution structure of the mitochondrial F1beta presequence from Nicotiana plumbaginifolia.</title>
        <authorList>
            <person name="Moberg P."/>
            <person name="Nilsson S."/>
            <person name="Staehl A."/>
            <person name="Eriksson A.-C."/>
            <person name="Glaser E."/>
            <person name="Maeler L."/>
        </authorList>
    </citation>
    <scope>STRUCTURE BY NMR OF 1-54</scope>
    <scope>TRANSIT PEPTIDE CLEAVAGE SITE</scope>
</reference>
<proteinExistence type="evidence at protein level"/>
<comment type="function">
    <text>Mitochondrial membrane ATP synthase (F(1)F(0) ATP synthase or Complex V) produces ATP from ADP in the presence of a proton gradient across the membrane which is generated by electron transport complexes of the respiratory chain. F-type ATPases consist of two structural domains, F(1) - containing the extramembraneous catalytic core, and F(0) - containing the membrane proton channel, linked together by a central stalk and a peripheral stalk. During catalysis, ATP synthesis in the catalytic domain of F(1) is coupled via a rotary mechanism of the central stalk subunits to proton translocation. Subunits alpha and beta form the catalytic core in F(1). Rotation of the central stalk against the surrounding alpha(3)beta(3) subunits leads to hydrolysis of ATP in three separate catalytic sites on the beta subunits.</text>
</comment>
<comment type="catalytic activity">
    <reaction>
        <text>ATP + H2O + 4 H(+)(in) = ADP + phosphate + 5 H(+)(out)</text>
        <dbReference type="Rhea" id="RHEA:57720"/>
        <dbReference type="ChEBI" id="CHEBI:15377"/>
        <dbReference type="ChEBI" id="CHEBI:15378"/>
        <dbReference type="ChEBI" id="CHEBI:30616"/>
        <dbReference type="ChEBI" id="CHEBI:43474"/>
        <dbReference type="ChEBI" id="CHEBI:456216"/>
        <dbReference type="EC" id="7.1.2.2"/>
    </reaction>
</comment>
<comment type="subunit">
    <text>F-type ATPases have 2 components, CF(1) - the catalytic core - and CF(0) - the membrane proton channel. CF(1) has five subunits: alpha(3), beta(3), gamma(1), delta(1), epsilon(1). CF(0) has three main subunits: a, b and c.</text>
</comment>
<comment type="interaction">
    <interactant intactId="EBI-7143406">
        <id>P17614</id>
    </interactant>
    <interactant intactId="EBI-7143359">
        <id>Q9LJL3</id>
        <label>PREP1</label>
    </interactant>
    <organismsDiffer>true</organismsDiffer>
    <experiments>6</experiments>
</comment>
<comment type="subcellular location">
    <subcellularLocation>
        <location>Mitochondrion</location>
    </subcellularLocation>
    <subcellularLocation>
        <location>Mitochondrion inner membrane</location>
    </subcellularLocation>
    <text>Peripheral membrane protein.</text>
</comment>
<comment type="similarity">
    <text evidence="4">Belongs to the ATPase alpha/beta chains family.</text>
</comment>